<comment type="function">
    <text evidence="1">Required for maturation of 30S ribosomal subunits.</text>
</comment>
<comment type="subcellular location">
    <subcellularLocation>
        <location evidence="1">Cytoplasm</location>
    </subcellularLocation>
</comment>
<comment type="similarity">
    <text evidence="1">Belongs to the RimP family.</text>
</comment>
<reference key="1">
    <citation type="journal article" date="2001" name="J. Bacteriol.">
        <title>Genome sequence and comparative analysis of the solvent-producing bacterium Clostridium acetobutylicum.</title>
        <authorList>
            <person name="Noelling J."/>
            <person name="Breton G."/>
            <person name="Omelchenko M.V."/>
            <person name="Makarova K.S."/>
            <person name="Zeng Q."/>
            <person name="Gibson R."/>
            <person name="Lee H.M."/>
            <person name="Dubois J."/>
            <person name="Qiu D."/>
            <person name="Hitti J."/>
            <person name="Wolf Y.I."/>
            <person name="Tatusov R.L."/>
            <person name="Sabathe F."/>
            <person name="Doucette-Stamm L.A."/>
            <person name="Soucaille P."/>
            <person name="Daly M.J."/>
            <person name="Bennett G.N."/>
            <person name="Koonin E.V."/>
            <person name="Smith D.R."/>
        </authorList>
    </citation>
    <scope>NUCLEOTIDE SEQUENCE [LARGE SCALE GENOMIC DNA]</scope>
    <source>
        <strain>ATCC 824 / DSM 792 / JCM 1419 / IAM 19013 / LMG 5710 / NBRC 13948 / NRRL B-527 / VKM B-1787 / 2291 / W</strain>
    </source>
</reference>
<accession>Q97I55</accession>
<name>RIMP_CLOAB</name>
<proteinExistence type="inferred from homology"/>
<sequence length="149" mass="17345">MIDKLIEIIRPVVESLGYEFYHIEIVKEDGERYLRVYIDKENGISLDDCEKVSRAISDLLDEKDPIPYSYYLEVSSPGIYRTLFTEEHLKKYIGNTVDIKLKSSLEKSTNYSGKLIDVNEEDIVIVVSDNREFKIPRKKIKKICLSGEF</sequence>
<dbReference type="EMBL" id="AE001437">
    <property type="protein sequence ID" value="AAK79763.1"/>
    <property type="molecule type" value="Genomic_DNA"/>
</dbReference>
<dbReference type="PIR" id="H97121">
    <property type="entry name" value="H97121"/>
</dbReference>
<dbReference type="RefSeq" id="NP_348423.1">
    <property type="nucleotide sequence ID" value="NC_003030.1"/>
</dbReference>
<dbReference type="RefSeq" id="WP_010965104.1">
    <property type="nucleotide sequence ID" value="NC_003030.1"/>
</dbReference>
<dbReference type="SMR" id="Q97I55"/>
<dbReference type="STRING" id="272562.CA_C1798"/>
<dbReference type="GeneID" id="44998292"/>
<dbReference type="KEGG" id="cac:CA_C1798"/>
<dbReference type="PATRIC" id="fig|272562.8.peg.2004"/>
<dbReference type="eggNOG" id="COG0779">
    <property type="taxonomic scope" value="Bacteria"/>
</dbReference>
<dbReference type="HOGENOM" id="CLU_070525_2_2_9"/>
<dbReference type="OrthoDB" id="9805006at2"/>
<dbReference type="Proteomes" id="UP000000814">
    <property type="component" value="Chromosome"/>
</dbReference>
<dbReference type="GO" id="GO:0005829">
    <property type="term" value="C:cytosol"/>
    <property type="evidence" value="ECO:0007669"/>
    <property type="project" value="TreeGrafter"/>
</dbReference>
<dbReference type="GO" id="GO:0000028">
    <property type="term" value="P:ribosomal small subunit assembly"/>
    <property type="evidence" value="ECO:0007669"/>
    <property type="project" value="TreeGrafter"/>
</dbReference>
<dbReference type="GO" id="GO:0006412">
    <property type="term" value="P:translation"/>
    <property type="evidence" value="ECO:0007669"/>
    <property type="project" value="TreeGrafter"/>
</dbReference>
<dbReference type="CDD" id="cd01734">
    <property type="entry name" value="YlxS_C"/>
    <property type="match status" value="1"/>
</dbReference>
<dbReference type="FunFam" id="3.30.300.70:FF:000001">
    <property type="entry name" value="Ribosome maturation factor RimP"/>
    <property type="match status" value="1"/>
</dbReference>
<dbReference type="Gene3D" id="2.30.30.180">
    <property type="entry name" value="Ribosome maturation factor RimP, C-terminal domain"/>
    <property type="match status" value="1"/>
</dbReference>
<dbReference type="Gene3D" id="3.30.300.70">
    <property type="entry name" value="RimP-like superfamily, N-terminal"/>
    <property type="match status" value="1"/>
</dbReference>
<dbReference type="HAMAP" id="MF_01077">
    <property type="entry name" value="RimP"/>
    <property type="match status" value="1"/>
</dbReference>
<dbReference type="InterPro" id="IPR003728">
    <property type="entry name" value="Ribosome_maturation_RimP"/>
</dbReference>
<dbReference type="InterPro" id="IPR028998">
    <property type="entry name" value="RimP_C"/>
</dbReference>
<dbReference type="InterPro" id="IPR036847">
    <property type="entry name" value="RimP_C_sf"/>
</dbReference>
<dbReference type="InterPro" id="IPR028989">
    <property type="entry name" value="RimP_N"/>
</dbReference>
<dbReference type="InterPro" id="IPR035956">
    <property type="entry name" value="RimP_N_sf"/>
</dbReference>
<dbReference type="NCBIfam" id="NF000934">
    <property type="entry name" value="PRK00092.3-1"/>
    <property type="match status" value="1"/>
</dbReference>
<dbReference type="PANTHER" id="PTHR33867">
    <property type="entry name" value="RIBOSOME MATURATION FACTOR RIMP"/>
    <property type="match status" value="1"/>
</dbReference>
<dbReference type="PANTHER" id="PTHR33867:SF1">
    <property type="entry name" value="RIBOSOME MATURATION FACTOR RIMP"/>
    <property type="match status" value="1"/>
</dbReference>
<dbReference type="Pfam" id="PF17384">
    <property type="entry name" value="DUF150_C"/>
    <property type="match status" value="1"/>
</dbReference>
<dbReference type="Pfam" id="PF02576">
    <property type="entry name" value="RimP_N"/>
    <property type="match status" value="1"/>
</dbReference>
<dbReference type="SUPFAM" id="SSF74942">
    <property type="entry name" value="YhbC-like, C-terminal domain"/>
    <property type="match status" value="1"/>
</dbReference>
<dbReference type="SUPFAM" id="SSF75420">
    <property type="entry name" value="YhbC-like, N-terminal domain"/>
    <property type="match status" value="1"/>
</dbReference>
<feature type="chain" id="PRO_0000181860" description="Ribosome maturation factor RimP">
    <location>
        <begin position="1"/>
        <end position="149"/>
    </location>
</feature>
<evidence type="ECO:0000255" key="1">
    <source>
        <dbReference type="HAMAP-Rule" id="MF_01077"/>
    </source>
</evidence>
<protein>
    <recommendedName>
        <fullName evidence="1">Ribosome maturation factor RimP</fullName>
    </recommendedName>
</protein>
<gene>
    <name evidence="1" type="primary">rimP</name>
    <name type="ordered locus">CA_C1798</name>
</gene>
<organism>
    <name type="scientific">Clostridium acetobutylicum (strain ATCC 824 / DSM 792 / JCM 1419 / IAM 19013 / LMG 5710 / NBRC 13948 / NRRL B-527 / VKM B-1787 / 2291 / W)</name>
    <dbReference type="NCBI Taxonomy" id="272562"/>
    <lineage>
        <taxon>Bacteria</taxon>
        <taxon>Bacillati</taxon>
        <taxon>Bacillota</taxon>
        <taxon>Clostridia</taxon>
        <taxon>Eubacteriales</taxon>
        <taxon>Clostridiaceae</taxon>
        <taxon>Clostridium</taxon>
    </lineage>
</organism>
<keyword id="KW-0963">Cytoplasm</keyword>
<keyword id="KW-1185">Reference proteome</keyword>
<keyword id="KW-0690">Ribosome biogenesis</keyword>